<sequence>MSYYAFEGLIPVVHPTAFVHPSAVLIGDVIVGAGVYIGPLASLRGDYGRLIVQAGANIQDGCIMHGYCDTDTIVGENGHIGHGAILHGCVIGRDALVGMNSVIMDGAVIGEESIVAAMSFVKAGFHGEKRQLLMGTPARAVRSVSDDELHWKRLNTKEYQDLVGRCHASLHETQPLRQMEENRPRLQGTTDVTPKR</sequence>
<evidence type="ECO:0000255" key="1">
    <source>
        <dbReference type="HAMAP-Rule" id="MF_01525"/>
    </source>
</evidence>
<evidence type="ECO:0000256" key="2">
    <source>
        <dbReference type="SAM" id="MobiDB-lite"/>
    </source>
</evidence>
<name>CAIE_ECO24</name>
<accession>A7ZHC6</accession>
<dbReference type="EMBL" id="CP000800">
    <property type="protein sequence ID" value="ABV18044.1"/>
    <property type="molecule type" value="Genomic_DNA"/>
</dbReference>
<dbReference type="RefSeq" id="WP_000122876.1">
    <property type="nucleotide sequence ID" value="NC_009801.1"/>
</dbReference>
<dbReference type="SMR" id="A7ZHC6"/>
<dbReference type="GeneID" id="93777400"/>
<dbReference type="KEGG" id="ecw:EcE24377A_0037"/>
<dbReference type="HOGENOM" id="CLU_064827_4_2_6"/>
<dbReference type="UniPathway" id="UPA00117"/>
<dbReference type="Proteomes" id="UP000001122">
    <property type="component" value="Chromosome"/>
</dbReference>
<dbReference type="GO" id="GO:0016740">
    <property type="term" value="F:transferase activity"/>
    <property type="evidence" value="ECO:0007669"/>
    <property type="project" value="UniProtKB-KW"/>
</dbReference>
<dbReference type="GO" id="GO:0009437">
    <property type="term" value="P:carnitine metabolic process"/>
    <property type="evidence" value="ECO:0007669"/>
    <property type="project" value="UniProtKB-UniRule"/>
</dbReference>
<dbReference type="CDD" id="cd04745">
    <property type="entry name" value="LbH_paaY_like"/>
    <property type="match status" value="1"/>
</dbReference>
<dbReference type="FunFam" id="2.160.10.10:FF:000012">
    <property type="entry name" value="Carnitine operon protein CaiE"/>
    <property type="match status" value="1"/>
</dbReference>
<dbReference type="Gene3D" id="2.160.10.10">
    <property type="entry name" value="Hexapeptide repeat proteins"/>
    <property type="match status" value="1"/>
</dbReference>
<dbReference type="HAMAP" id="MF_01525">
    <property type="entry name" value="CaiE"/>
    <property type="match status" value="1"/>
</dbReference>
<dbReference type="InterPro" id="IPR023446">
    <property type="entry name" value="CaiE"/>
</dbReference>
<dbReference type="InterPro" id="IPR001451">
    <property type="entry name" value="Hexapep"/>
</dbReference>
<dbReference type="InterPro" id="IPR050484">
    <property type="entry name" value="Transf_Hexapept/Carb_Anhydrase"/>
</dbReference>
<dbReference type="InterPro" id="IPR011004">
    <property type="entry name" value="Trimer_LpxA-like_sf"/>
</dbReference>
<dbReference type="NCBIfam" id="NF010150">
    <property type="entry name" value="PRK13627.1"/>
    <property type="match status" value="1"/>
</dbReference>
<dbReference type="PANTHER" id="PTHR13061">
    <property type="entry name" value="DYNACTIN SUBUNIT P25"/>
    <property type="match status" value="1"/>
</dbReference>
<dbReference type="PANTHER" id="PTHR13061:SF29">
    <property type="entry name" value="GAMMA CARBONIC ANHYDRASE-LIKE 1, MITOCHONDRIAL-RELATED"/>
    <property type="match status" value="1"/>
</dbReference>
<dbReference type="Pfam" id="PF00132">
    <property type="entry name" value="Hexapep"/>
    <property type="match status" value="1"/>
</dbReference>
<dbReference type="SUPFAM" id="SSF51161">
    <property type="entry name" value="Trimeric LpxA-like enzymes"/>
    <property type="match status" value="1"/>
</dbReference>
<gene>
    <name evidence="1" type="primary">caiE</name>
    <name type="ordered locus">EcE24377A_0037</name>
</gene>
<protein>
    <recommendedName>
        <fullName evidence="1">Carnitine operon protein CaiE</fullName>
    </recommendedName>
</protein>
<organism>
    <name type="scientific">Escherichia coli O139:H28 (strain E24377A / ETEC)</name>
    <dbReference type="NCBI Taxonomy" id="331111"/>
    <lineage>
        <taxon>Bacteria</taxon>
        <taxon>Pseudomonadati</taxon>
        <taxon>Pseudomonadota</taxon>
        <taxon>Gammaproteobacteria</taxon>
        <taxon>Enterobacterales</taxon>
        <taxon>Enterobacteriaceae</taxon>
        <taxon>Escherichia</taxon>
    </lineage>
</organism>
<feature type="chain" id="PRO_1000068656" description="Carnitine operon protein CaiE">
    <location>
        <begin position="1"/>
        <end position="196"/>
    </location>
</feature>
<feature type="region of interest" description="Disordered" evidence="2">
    <location>
        <begin position="173"/>
        <end position="196"/>
    </location>
</feature>
<feature type="compositionally biased region" description="Polar residues" evidence="2">
    <location>
        <begin position="187"/>
        <end position="196"/>
    </location>
</feature>
<proteinExistence type="inferred from homology"/>
<reference key="1">
    <citation type="journal article" date="2008" name="J. Bacteriol.">
        <title>The pangenome structure of Escherichia coli: comparative genomic analysis of E. coli commensal and pathogenic isolates.</title>
        <authorList>
            <person name="Rasko D.A."/>
            <person name="Rosovitz M.J."/>
            <person name="Myers G.S.A."/>
            <person name="Mongodin E.F."/>
            <person name="Fricke W.F."/>
            <person name="Gajer P."/>
            <person name="Crabtree J."/>
            <person name="Sebaihia M."/>
            <person name="Thomson N.R."/>
            <person name="Chaudhuri R."/>
            <person name="Henderson I.R."/>
            <person name="Sperandio V."/>
            <person name="Ravel J."/>
        </authorList>
    </citation>
    <scope>NUCLEOTIDE SEQUENCE [LARGE SCALE GENOMIC DNA]</scope>
    <source>
        <strain>E24377A / ETEC</strain>
    </source>
</reference>
<keyword id="KW-1185">Reference proteome</keyword>
<keyword id="KW-0677">Repeat</keyword>
<keyword id="KW-0808">Transferase</keyword>
<comment type="function">
    <text evidence="1">Overproduction of CaiE stimulates the activity of CaiB and CaiD.</text>
</comment>
<comment type="pathway">
    <text evidence="1">Amine and polyamine metabolism; carnitine metabolism.</text>
</comment>
<comment type="similarity">
    <text evidence="1">Belongs to the transferase hexapeptide repeat family.</text>
</comment>